<evidence type="ECO:0000255" key="1">
    <source>
        <dbReference type="HAMAP-Rule" id="MF_00074"/>
    </source>
</evidence>
<evidence type="ECO:0000256" key="2">
    <source>
        <dbReference type="SAM" id="MobiDB-lite"/>
    </source>
</evidence>
<name>RSMG_RHOP2</name>
<reference key="1">
    <citation type="submission" date="2006-01" db="EMBL/GenBank/DDBJ databases">
        <title>Complete sequence of Rhodopseudomonas palustris HaA2.</title>
        <authorList>
            <consortium name="US DOE Joint Genome Institute"/>
            <person name="Copeland A."/>
            <person name="Lucas S."/>
            <person name="Lapidus A."/>
            <person name="Barry K."/>
            <person name="Detter J.C."/>
            <person name="Glavina T."/>
            <person name="Hammon N."/>
            <person name="Israni S."/>
            <person name="Pitluck S."/>
            <person name="Chain P."/>
            <person name="Malfatti S."/>
            <person name="Shin M."/>
            <person name="Vergez L."/>
            <person name="Schmutz J."/>
            <person name="Larimer F."/>
            <person name="Land M."/>
            <person name="Hauser L."/>
            <person name="Pelletier D.A."/>
            <person name="Kyrpides N."/>
            <person name="Anderson I."/>
            <person name="Oda Y."/>
            <person name="Harwood C.S."/>
            <person name="Richardson P."/>
        </authorList>
    </citation>
    <scope>NUCLEOTIDE SEQUENCE [LARGE SCALE GENOMIC DNA]</scope>
    <source>
        <strain>HaA2</strain>
    </source>
</reference>
<keyword id="KW-0963">Cytoplasm</keyword>
<keyword id="KW-0489">Methyltransferase</keyword>
<keyword id="KW-1185">Reference proteome</keyword>
<keyword id="KW-0698">rRNA processing</keyword>
<keyword id="KW-0949">S-adenosyl-L-methionine</keyword>
<keyword id="KW-0808">Transferase</keyword>
<feature type="chain" id="PRO_1000010192" description="Ribosomal RNA small subunit methyltransferase G">
    <location>
        <begin position="1"/>
        <end position="237"/>
    </location>
</feature>
<feature type="region of interest" description="Disordered" evidence="2">
    <location>
        <begin position="1"/>
        <end position="25"/>
    </location>
</feature>
<feature type="compositionally biased region" description="Low complexity" evidence="2">
    <location>
        <begin position="7"/>
        <end position="21"/>
    </location>
</feature>
<feature type="binding site" evidence="1">
    <location>
        <position position="85"/>
    </location>
    <ligand>
        <name>S-adenosyl-L-methionine</name>
        <dbReference type="ChEBI" id="CHEBI:59789"/>
    </ligand>
</feature>
<feature type="binding site" evidence="1">
    <location>
        <position position="90"/>
    </location>
    <ligand>
        <name>S-adenosyl-L-methionine</name>
        <dbReference type="ChEBI" id="CHEBI:59789"/>
    </ligand>
</feature>
<feature type="binding site" evidence="1">
    <location>
        <position position="155"/>
    </location>
    <ligand>
        <name>S-adenosyl-L-methionine</name>
        <dbReference type="ChEBI" id="CHEBI:59789"/>
    </ligand>
</feature>
<sequence>MASRHSPQTAAQPDAADKAQALRLTPVSRETETRLDAYLDLLRLWQAKTNLVAPSTLPQLWTRHVADSLQLLALAPTARRWLDFGSGGGFPGIVLACAMAEHDGGHVTLVERNAKKAAFLREALRVTGAPGTVMLADIGDNVDRFPRALDCITARAVAPLHQLIGFAAPLMTEGSKVLFLKGQDVEAELTEATKYWKIEPQLHASLTGGQGWIVELDRIVRHAPSTTNPEAAAHDRH</sequence>
<comment type="function">
    <text evidence="1">Specifically methylates the N7 position of guanine in position 527 of 16S rRNA.</text>
</comment>
<comment type="catalytic activity">
    <reaction evidence="1">
        <text>guanosine(527) in 16S rRNA + S-adenosyl-L-methionine = N(7)-methylguanosine(527) in 16S rRNA + S-adenosyl-L-homocysteine</text>
        <dbReference type="Rhea" id="RHEA:42732"/>
        <dbReference type="Rhea" id="RHEA-COMP:10209"/>
        <dbReference type="Rhea" id="RHEA-COMP:10210"/>
        <dbReference type="ChEBI" id="CHEBI:57856"/>
        <dbReference type="ChEBI" id="CHEBI:59789"/>
        <dbReference type="ChEBI" id="CHEBI:74269"/>
        <dbReference type="ChEBI" id="CHEBI:74480"/>
        <dbReference type="EC" id="2.1.1.170"/>
    </reaction>
</comment>
<comment type="subcellular location">
    <subcellularLocation>
        <location evidence="1">Cytoplasm</location>
    </subcellularLocation>
</comment>
<comment type="similarity">
    <text evidence="1">Belongs to the methyltransferase superfamily. RNA methyltransferase RsmG family.</text>
</comment>
<dbReference type="EC" id="2.1.1.170" evidence="1"/>
<dbReference type="EMBL" id="CP000250">
    <property type="protein sequence ID" value="ABD05101.1"/>
    <property type="molecule type" value="Genomic_DNA"/>
</dbReference>
<dbReference type="RefSeq" id="WP_011439291.1">
    <property type="nucleotide sequence ID" value="NC_007778.1"/>
</dbReference>
<dbReference type="SMR" id="Q2J359"/>
<dbReference type="STRING" id="316058.RPB_0390"/>
<dbReference type="KEGG" id="rpb:RPB_0390"/>
<dbReference type="eggNOG" id="COG0357">
    <property type="taxonomic scope" value="Bacteria"/>
</dbReference>
<dbReference type="HOGENOM" id="CLU_065341_1_0_5"/>
<dbReference type="OrthoDB" id="9808773at2"/>
<dbReference type="Proteomes" id="UP000008809">
    <property type="component" value="Chromosome"/>
</dbReference>
<dbReference type="GO" id="GO:0005829">
    <property type="term" value="C:cytosol"/>
    <property type="evidence" value="ECO:0007669"/>
    <property type="project" value="TreeGrafter"/>
</dbReference>
<dbReference type="GO" id="GO:0070043">
    <property type="term" value="F:rRNA (guanine-N7-)-methyltransferase activity"/>
    <property type="evidence" value="ECO:0007669"/>
    <property type="project" value="UniProtKB-UniRule"/>
</dbReference>
<dbReference type="CDD" id="cd02440">
    <property type="entry name" value="AdoMet_MTases"/>
    <property type="match status" value="1"/>
</dbReference>
<dbReference type="Gene3D" id="3.40.50.150">
    <property type="entry name" value="Vaccinia Virus protein VP39"/>
    <property type="match status" value="1"/>
</dbReference>
<dbReference type="HAMAP" id="MF_00074">
    <property type="entry name" value="16SrRNA_methyltr_G"/>
    <property type="match status" value="1"/>
</dbReference>
<dbReference type="InterPro" id="IPR003682">
    <property type="entry name" value="rRNA_ssu_MeTfrase_G"/>
</dbReference>
<dbReference type="InterPro" id="IPR029063">
    <property type="entry name" value="SAM-dependent_MTases_sf"/>
</dbReference>
<dbReference type="NCBIfam" id="TIGR00138">
    <property type="entry name" value="rsmG_gidB"/>
    <property type="match status" value="1"/>
</dbReference>
<dbReference type="PANTHER" id="PTHR31760">
    <property type="entry name" value="S-ADENOSYL-L-METHIONINE-DEPENDENT METHYLTRANSFERASES SUPERFAMILY PROTEIN"/>
    <property type="match status" value="1"/>
</dbReference>
<dbReference type="PANTHER" id="PTHR31760:SF0">
    <property type="entry name" value="S-ADENOSYL-L-METHIONINE-DEPENDENT METHYLTRANSFERASES SUPERFAMILY PROTEIN"/>
    <property type="match status" value="1"/>
</dbReference>
<dbReference type="Pfam" id="PF02527">
    <property type="entry name" value="GidB"/>
    <property type="match status" value="1"/>
</dbReference>
<dbReference type="PIRSF" id="PIRSF003078">
    <property type="entry name" value="GidB"/>
    <property type="match status" value="1"/>
</dbReference>
<dbReference type="SUPFAM" id="SSF53335">
    <property type="entry name" value="S-adenosyl-L-methionine-dependent methyltransferases"/>
    <property type="match status" value="1"/>
</dbReference>
<accession>Q2J359</accession>
<gene>
    <name evidence="1" type="primary">rsmG</name>
    <name type="ordered locus">RPB_0390</name>
</gene>
<protein>
    <recommendedName>
        <fullName evidence="1">Ribosomal RNA small subunit methyltransferase G</fullName>
        <ecNumber evidence="1">2.1.1.170</ecNumber>
    </recommendedName>
    <alternativeName>
        <fullName evidence="1">16S rRNA 7-methylguanosine methyltransferase</fullName>
        <shortName evidence="1">16S rRNA m7G methyltransferase</shortName>
    </alternativeName>
</protein>
<proteinExistence type="inferred from homology"/>
<organism>
    <name type="scientific">Rhodopseudomonas palustris (strain HaA2)</name>
    <dbReference type="NCBI Taxonomy" id="316058"/>
    <lineage>
        <taxon>Bacteria</taxon>
        <taxon>Pseudomonadati</taxon>
        <taxon>Pseudomonadota</taxon>
        <taxon>Alphaproteobacteria</taxon>
        <taxon>Hyphomicrobiales</taxon>
        <taxon>Nitrobacteraceae</taxon>
        <taxon>Rhodopseudomonas</taxon>
    </lineage>
</organism>